<gene>
    <name evidence="1" type="primary">nadK</name>
    <name type="ordered locus">swp_3628</name>
</gene>
<keyword id="KW-0067">ATP-binding</keyword>
<keyword id="KW-0963">Cytoplasm</keyword>
<keyword id="KW-0418">Kinase</keyword>
<keyword id="KW-0520">NAD</keyword>
<keyword id="KW-0521">NADP</keyword>
<keyword id="KW-0547">Nucleotide-binding</keyword>
<keyword id="KW-0808">Transferase</keyword>
<name>NADK_SHEPW</name>
<accession>B8CS28</accession>
<dbReference type="EC" id="2.7.1.23" evidence="1"/>
<dbReference type="EMBL" id="CP000472">
    <property type="protein sequence ID" value="ACJ30318.1"/>
    <property type="molecule type" value="Genomic_DNA"/>
</dbReference>
<dbReference type="SMR" id="B8CS28"/>
<dbReference type="STRING" id="225849.swp_3628"/>
<dbReference type="KEGG" id="swp:swp_3628"/>
<dbReference type="eggNOG" id="COG0061">
    <property type="taxonomic scope" value="Bacteria"/>
</dbReference>
<dbReference type="HOGENOM" id="CLU_008831_0_1_6"/>
<dbReference type="Proteomes" id="UP000000753">
    <property type="component" value="Chromosome"/>
</dbReference>
<dbReference type="GO" id="GO:0005737">
    <property type="term" value="C:cytoplasm"/>
    <property type="evidence" value="ECO:0007669"/>
    <property type="project" value="UniProtKB-SubCell"/>
</dbReference>
<dbReference type="GO" id="GO:0005524">
    <property type="term" value="F:ATP binding"/>
    <property type="evidence" value="ECO:0007669"/>
    <property type="project" value="UniProtKB-KW"/>
</dbReference>
<dbReference type="GO" id="GO:0046872">
    <property type="term" value="F:metal ion binding"/>
    <property type="evidence" value="ECO:0007669"/>
    <property type="project" value="UniProtKB-UniRule"/>
</dbReference>
<dbReference type="GO" id="GO:0051287">
    <property type="term" value="F:NAD binding"/>
    <property type="evidence" value="ECO:0007669"/>
    <property type="project" value="UniProtKB-ARBA"/>
</dbReference>
<dbReference type="GO" id="GO:0003951">
    <property type="term" value="F:NAD+ kinase activity"/>
    <property type="evidence" value="ECO:0007669"/>
    <property type="project" value="UniProtKB-UniRule"/>
</dbReference>
<dbReference type="GO" id="GO:0019674">
    <property type="term" value="P:NAD metabolic process"/>
    <property type="evidence" value="ECO:0007669"/>
    <property type="project" value="InterPro"/>
</dbReference>
<dbReference type="GO" id="GO:0006741">
    <property type="term" value="P:NADP biosynthetic process"/>
    <property type="evidence" value="ECO:0007669"/>
    <property type="project" value="UniProtKB-UniRule"/>
</dbReference>
<dbReference type="FunFam" id="2.60.200.30:FF:000001">
    <property type="entry name" value="NAD kinase"/>
    <property type="match status" value="1"/>
</dbReference>
<dbReference type="Gene3D" id="3.40.50.10330">
    <property type="entry name" value="Probable inorganic polyphosphate/atp-NAD kinase, domain 1"/>
    <property type="match status" value="1"/>
</dbReference>
<dbReference type="Gene3D" id="2.60.200.30">
    <property type="entry name" value="Probable inorganic polyphosphate/atp-NAD kinase, domain 2"/>
    <property type="match status" value="1"/>
</dbReference>
<dbReference type="HAMAP" id="MF_00361">
    <property type="entry name" value="NAD_kinase"/>
    <property type="match status" value="1"/>
</dbReference>
<dbReference type="InterPro" id="IPR017438">
    <property type="entry name" value="ATP-NAD_kinase_N"/>
</dbReference>
<dbReference type="InterPro" id="IPR017437">
    <property type="entry name" value="ATP-NAD_kinase_PpnK-typ_C"/>
</dbReference>
<dbReference type="InterPro" id="IPR016064">
    <property type="entry name" value="NAD/diacylglycerol_kinase_sf"/>
</dbReference>
<dbReference type="InterPro" id="IPR002504">
    <property type="entry name" value="NADK"/>
</dbReference>
<dbReference type="NCBIfam" id="NF002306">
    <property type="entry name" value="PRK01231.1"/>
    <property type="match status" value="1"/>
</dbReference>
<dbReference type="NCBIfam" id="NF002893">
    <property type="entry name" value="PRK03378.1"/>
    <property type="match status" value="1"/>
</dbReference>
<dbReference type="PANTHER" id="PTHR20275">
    <property type="entry name" value="NAD KINASE"/>
    <property type="match status" value="1"/>
</dbReference>
<dbReference type="PANTHER" id="PTHR20275:SF0">
    <property type="entry name" value="NAD KINASE"/>
    <property type="match status" value="1"/>
</dbReference>
<dbReference type="Pfam" id="PF01513">
    <property type="entry name" value="NAD_kinase"/>
    <property type="match status" value="1"/>
</dbReference>
<dbReference type="Pfam" id="PF20143">
    <property type="entry name" value="NAD_kinase_C"/>
    <property type="match status" value="1"/>
</dbReference>
<dbReference type="SUPFAM" id="SSF111331">
    <property type="entry name" value="NAD kinase/diacylglycerol kinase-like"/>
    <property type="match status" value="1"/>
</dbReference>
<evidence type="ECO:0000255" key="1">
    <source>
        <dbReference type="HAMAP-Rule" id="MF_00361"/>
    </source>
</evidence>
<proteinExistence type="inferred from homology"/>
<sequence length="309" mass="33639">MGINFEVSRPKAGSDTNMSNTFHTIGLIGKPNHEGTNLTLKRLHHWLTMQGYSVLVEERVASDVGSHTHSVDLLEIGANCDLAIVVGGDGNMLGAARVLARFDIAVIGVNRGNLGFLTDLPPDTFEEALSKVLEGEFDTEQRFLLEAEVHRHGELKSSNTAVNEAVLHPGKIAHMIEFEVYIDDKFMYSQRADGMIVSTPTGSTAYSLSAGGAILTPNLEAMILVPMFPHTLSCRPIVVDACSIIKLVVSPHNGDNLEVSCDGHVNLSVLPGDEIIVKRSADTLRLIHPKGHNYFHVLRTKLGWGSKLF</sequence>
<protein>
    <recommendedName>
        <fullName evidence="1">NAD kinase</fullName>
        <ecNumber evidence="1">2.7.1.23</ecNumber>
    </recommendedName>
    <alternativeName>
        <fullName evidence="1">ATP-dependent NAD kinase</fullName>
    </alternativeName>
</protein>
<feature type="chain" id="PRO_1000120888" description="NAD kinase">
    <location>
        <begin position="1"/>
        <end position="309"/>
    </location>
</feature>
<feature type="active site" description="Proton acceptor" evidence="1">
    <location>
        <position position="89"/>
    </location>
</feature>
<feature type="binding site" evidence="1">
    <location>
        <begin position="89"/>
        <end position="90"/>
    </location>
    <ligand>
        <name>NAD(+)</name>
        <dbReference type="ChEBI" id="CHEBI:57540"/>
    </ligand>
</feature>
<feature type="binding site" evidence="1">
    <location>
        <begin position="163"/>
        <end position="164"/>
    </location>
    <ligand>
        <name>NAD(+)</name>
        <dbReference type="ChEBI" id="CHEBI:57540"/>
    </ligand>
</feature>
<feature type="binding site" evidence="1">
    <location>
        <position position="174"/>
    </location>
    <ligand>
        <name>NAD(+)</name>
        <dbReference type="ChEBI" id="CHEBI:57540"/>
    </ligand>
</feature>
<feature type="binding site" evidence="1">
    <location>
        <position position="191"/>
    </location>
    <ligand>
        <name>NAD(+)</name>
        <dbReference type="ChEBI" id="CHEBI:57540"/>
    </ligand>
</feature>
<feature type="binding site" evidence="1">
    <location>
        <position position="193"/>
    </location>
    <ligand>
        <name>NAD(+)</name>
        <dbReference type="ChEBI" id="CHEBI:57540"/>
    </ligand>
</feature>
<feature type="binding site" evidence="1">
    <location>
        <begin position="204"/>
        <end position="209"/>
    </location>
    <ligand>
        <name>NAD(+)</name>
        <dbReference type="ChEBI" id="CHEBI:57540"/>
    </ligand>
</feature>
<reference key="1">
    <citation type="journal article" date="2008" name="PLoS ONE">
        <title>Environmental adaptation: genomic analysis of the piezotolerant and psychrotolerant deep-sea iron reducing bacterium Shewanella piezotolerans WP3.</title>
        <authorList>
            <person name="Wang F."/>
            <person name="Wang J."/>
            <person name="Jian H."/>
            <person name="Zhang B."/>
            <person name="Li S."/>
            <person name="Wang F."/>
            <person name="Zeng X."/>
            <person name="Gao L."/>
            <person name="Bartlett D.H."/>
            <person name="Yu J."/>
            <person name="Hu S."/>
            <person name="Xiao X."/>
        </authorList>
    </citation>
    <scope>NUCLEOTIDE SEQUENCE [LARGE SCALE GENOMIC DNA]</scope>
    <source>
        <strain>WP3 / JCM 13877</strain>
    </source>
</reference>
<organism>
    <name type="scientific">Shewanella piezotolerans (strain WP3 / JCM 13877)</name>
    <dbReference type="NCBI Taxonomy" id="225849"/>
    <lineage>
        <taxon>Bacteria</taxon>
        <taxon>Pseudomonadati</taxon>
        <taxon>Pseudomonadota</taxon>
        <taxon>Gammaproteobacteria</taxon>
        <taxon>Alteromonadales</taxon>
        <taxon>Shewanellaceae</taxon>
        <taxon>Shewanella</taxon>
    </lineage>
</organism>
<comment type="function">
    <text evidence="1">Involved in the regulation of the intracellular balance of NAD and NADP, and is a key enzyme in the biosynthesis of NADP. Catalyzes specifically the phosphorylation on 2'-hydroxyl of the adenosine moiety of NAD to yield NADP.</text>
</comment>
<comment type="catalytic activity">
    <reaction evidence="1">
        <text>NAD(+) + ATP = ADP + NADP(+) + H(+)</text>
        <dbReference type="Rhea" id="RHEA:18629"/>
        <dbReference type="ChEBI" id="CHEBI:15378"/>
        <dbReference type="ChEBI" id="CHEBI:30616"/>
        <dbReference type="ChEBI" id="CHEBI:57540"/>
        <dbReference type="ChEBI" id="CHEBI:58349"/>
        <dbReference type="ChEBI" id="CHEBI:456216"/>
        <dbReference type="EC" id="2.7.1.23"/>
    </reaction>
</comment>
<comment type="cofactor">
    <cofactor evidence="1">
        <name>a divalent metal cation</name>
        <dbReference type="ChEBI" id="CHEBI:60240"/>
    </cofactor>
</comment>
<comment type="subcellular location">
    <subcellularLocation>
        <location evidence="1">Cytoplasm</location>
    </subcellularLocation>
</comment>
<comment type="similarity">
    <text evidence="1">Belongs to the NAD kinase family.</text>
</comment>